<protein>
    <recommendedName>
        <fullName evidence="1">Polymerase basic protein 2</fullName>
    </recommendedName>
    <alternativeName>
        <fullName evidence="1">RNA-directed RNA polymerase subunit P3</fullName>
    </alternativeName>
</protein>
<proteinExistence type="inferred from homology"/>
<feature type="chain" id="PRO_0000373035" description="Polymerase basic protein 2">
    <location>
        <begin position="1"/>
        <end position="759"/>
    </location>
</feature>
<feature type="short sequence motif" description="Nuclear localization signal" evidence="1">
    <location>
        <begin position="736"/>
        <end position="739"/>
    </location>
</feature>
<feature type="site" description="Mammalian adaptation" evidence="1">
    <location>
        <position position="627"/>
    </location>
</feature>
<organismHost>
    <name type="scientific">Aves</name>
    <dbReference type="NCBI Taxonomy" id="8782"/>
</organismHost>
<organismHost>
    <name type="scientific">Homo sapiens</name>
    <name type="common">Human</name>
    <dbReference type="NCBI Taxonomy" id="9606"/>
</organismHost>
<organismHost>
    <name type="scientific">Sus scrofa</name>
    <name type="common">Pig</name>
    <dbReference type="NCBI Taxonomy" id="9823"/>
</organismHost>
<gene>
    <name evidence="1" type="primary">PB2</name>
</gene>
<dbReference type="EMBL" id="CY021828">
    <property type="protein sequence ID" value="ABP49491.1"/>
    <property type="molecule type" value="Viral_cRNA"/>
</dbReference>
<dbReference type="SMR" id="A4U7B6"/>
<dbReference type="PRO" id="PR:A4U7B6"/>
<dbReference type="Proteomes" id="UP000007556">
    <property type="component" value="Genome"/>
</dbReference>
<dbReference type="GO" id="GO:0033650">
    <property type="term" value="C:host cell mitochondrion"/>
    <property type="evidence" value="ECO:0007669"/>
    <property type="project" value="UniProtKB-SubCell"/>
</dbReference>
<dbReference type="GO" id="GO:0042025">
    <property type="term" value="C:host cell nucleus"/>
    <property type="evidence" value="ECO:0007669"/>
    <property type="project" value="UniProtKB-SubCell"/>
</dbReference>
<dbReference type="GO" id="GO:0044423">
    <property type="term" value="C:virion component"/>
    <property type="evidence" value="ECO:0007669"/>
    <property type="project" value="UniProtKB-UniRule"/>
</dbReference>
<dbReference type="GO" id="GO:0003723">
    <property type="term" value="F:RNA binding"/>
    <property type="evidence" value="ECO:0007669"/>
    <property type="project" value="UniProtKB-UniRule"/>
</dbReference>
<dbReference type="GO" id="GO:0003968">
    <property type="term" value="F:RNA-directed RNA polymerase activity"/>
    <property type="evidence" value="ECO:0007669"/>
    <property type="project" value="UniProtKB-UniRule"/>
</dbReference>
<dbReference type="GO" id="GO:0006370">
    <property type="term" value="P:7-methylguanosine mRNA capping"/>
    <property type="evidence" value="ECO:0007669"/>
    <property type="project" value="UniProtKB-UniRule"/>
</dbReference>
<dbReference type="GO" id="GO:0075526">
    <property type="term" value="P:cap snatching"/>
    <property type="evidence" value="ECO:0007669"/>
    <property type="project" value="UniProtKB-UniRule"/>
</dbReference>
<dbReference type="GO" id="GO:0006351">
    <property type="term" value="P:DNA-templated transcription"/>
    <property type="evidence" value="ECO:0007669"/>
    <property type="project" value="UniProtKB-UniRule"/>
</dbReference>
<dbReference type="GO" id="GO:0039545">
    <property type="term" value="P:symbiont-mediated suppression of host cytoplasmic pattern recognition receptor signaling pathway via inhibition of MAVS activity"/>
    <property type="evidence" value="ECO:0007669"/>
    <property type="project" value="UniProtKB-UniRule"/>
</dbReference>
<dbReference type="GO" id="GO:0039657">
    <property type="term" value="P:symbiont-mediated suppression of host gene expression"/>
    <property type="evidence" value="ECO:0007669"/>
    <property type="project" value="UniProtKB-KW"/>
</dbReference>
<dbReference type="GO" id="GO:0039523">
    <property type="term" value="P:symbiont-mediated suppression of host mRNA transcription via inhibition of RNA polymerase II activity"/>
    <property type="evidence" value="ECO:0007669"/>
    <property type="project" value="UniProtKB-UniRule"/>
</dbReference>
<dbReference type="GO" id="GO:0039694">
    <property type="term" value="P:viral RNA genome replication"/>
    <property type="evidence" value="ECO:0007669"/>
    <property type="project" value="InterPro"/>
</dbReference>
<dbReference type="FunFam" id="3.30.30.90:FF:000001">
    <property type="entry name" value="Polymerase basic protein 2"/>
    <property type="match status" value="1"/>
</dbReference>
<dbReference type="Gene3D" id="3.30.30.90">
    <property type="entry name" value="Polymerase Basic Protein 2, C-terminal domain"/>
    <property type="match status" value="1"/>
</dbReference>
<dbReference type="HAMAP" id="MF_04062">
    <property type="entry name" value="INV_PB2"/>
    <property type="match status" value="1"/>
</dbReference>
<dbReference type="InterPro" id="IPR049110">
    <property type="entry name" value="Flu_PB2_2nd"/>
</dbReference>
<dbReference type="InterPro" id="IPR049114">
    <property type="entry name" value="Flu_PB2_6th"/>
</dbReference>
<dbReference type="InterPro" id="IPR049115">
    <property type="entry name" value="Flu_PB2_C"/>
</dbReference>
<dbReference type="InterPro" id="IPR048298">
    <property type="entry name" value="Flu_PB2_CAP-bd"/>
</dbReference>
<dbReference type="InterPro" id="IPR049111">
    <property type="entry name" value="Flu_PB2_middle"/>
</dbReference>
<dbReference type="InterPro" id="IPR049106">
    <property type="entry name" value="Flu_PB2_N"/>
</dbReference>
<dbReference type="InterPro" id="IPR001591">
    <property type="entry name" value="INV_PB2"/>
</dbReference>
<dbReference type="InterPro" id="IPR049113">
    <property type="entry name" value="PB2_helical"/>
</dbReference>
<dbReference type="InterPro" id="IPR037258">
    <property type="entry name" value="PDB2_C"/>
</dbReference>
<dbReference type="Pfam" id="PF20947">
    <property type="entry name" value="Flu_PB2_1st"/>
    <property type="match status" value="1"/>
</dbReference>
<dbReference type="Pfam" id="PF20948">
    <property type="entry name" value="Flu_PB2_2nd"/>
    <property type="match status" value="1"/>
</dbReference>
<dbReference type="Pfam" id="PF20949">
    <property type="entry name" value="Flu_PB2_3rd"/>
    <property type="match status" value="1"/>
</dbReference>
<dbReference type="Pfam" id="PF20950">
    <property type="entry name" value="Flu_PB2_4th"/>
    <property type="match status" value="1"/>
</dbReference>
<dbReference type="Pfam" id="PF00604">
    <property type="entry name" value="Flu_PB2_5th"/>
    <property type="match status" value="1"/>
</dbReference>
<dbReference type="Pfam" id="PF20951">
    <property type="entry name" value="Flu_PB2_6th"/>
    <property type="match status" value="1"/>
</dbReference>
<dbReference type="Pfam" id="PF20952">
    <property type="entry name" value="Flu_PB2_7th"/>
    <property type="match status" value="1"/>
</dbReference>
<dbReference type="SUPFAM" id="SSF160453">
    <property type="entry name" value="PB2 C-terminal domain-like"/>
    <property type="match status" value="1"/>
</dbReference>
<comment type="function">
    <text evidence="1">Plays an essential role in transcription initiation and cap-stealing mechanism, in which cellular capped pre-mRNAs are used to generate primers for viral transcription. Recognizes and binds the 7-methylguanosine-containing cap of the target pre-RNA which is subsequently cleaved after 10-13 nucleotides by the viral protein PA. Plays a role in the initiation of the viral genome replication and modulates the activity of the ribonucleoprotein (RNP) complex. In addition, participates in the inhibition of type I interferon induction through interaction with and inhibition of the host mitochondrial antiviral signaling protein MAVS.</text>
</comment>
<comment type="subunit">
    <text evidence="1">Influenza RNA polymerase is composed of three subunits: PB1, PB2 and PA. Interacts (via N-terminus) with PB1 (via C-terminus). Interacts with nucleoprotein NP (via N-terminus). Interacts (via N-terminus) with host MAVS (via N-terminus); this interaction inhibits host innate immune response.</text>
</comment>
<comment type="subcellular location">
    <subcellularLocation>
        <location evidence="1">Virion</location>
    </subcellularLocation>
    <subcellularLocation>
        <location evidence="1">Host nucleus</location>
    </subcellularLocation>
    <subcellularLocation>
        <location evidence="1">Host mitochondrion</location>
    </subcellularLocation>
</comment>
<comment type="similarity">
    <text evidence="1">Belongs to the influenza viruses PB2 family.</text>
</comment>
<keyword id="KW-1157">Cap snatching</keyword>
<keyword id="KW-1262">Eukaryotic host gene expression shutoff by virus</keyword>
<keyword id="KW-1191">Eukaryotic host transcription shutoff by virus</keyword>
<keyword id="KW-1190">Host gene expression shutoff by virus</keyword>
<keyword id="KW-1045">Host mitochondrion</keyword>
<keyword id="KW-1048">Host nucleus</keyword>
<keyword id="KW-0945">Host-virus interaction</keyword>
<keyword id="KW-1090">Inhibition of host innate immune response by virus</keyword>
<keyword id="KW-1097">Inhibition of host MAVS by virus</keyword>
<keyword id="KW-1113">Inhibition of host RLR pathway by virus</keyword>
<keyword id="KW-1104">Inhibition of host RNA polymerase II by virus</keyword>
<keyword id="KW-0506">mRNA capping</keyword>
<keyword id="KW-0507">mRNA processing</keyword>
<keyword id="KW-0899">Viral immunoevasion</keyword>
<keyword id="KW-1195">Viral transcription</keyword>
<keyword id="KW-0946">Virion</keyword>
<evidence type="ECO:0000255" key="1">
    <source>
        <dbReference type="HAMAP-Rule" id="MF_04062"/>
    </source>
</evidence>
<name>PB2_I51A0</name>
<accession>A4U7B6</accession>
<reference key="1">
    <citation type="submission" date="2007-04" db="EMBL/GenBank/DDBJ databases">
        <title>The NIAID influenza genome sequencing project.</title>
        <authorList>
            <person name="Spiro D."/>
            <person name="Sengamalay N."/>
            <person name="Boyne A."/>
            <person name="Bera J."/>
            <person name="Ghedin E."/>
            <person name="Zaborsky J."/>
            <person name="Subbu V."/>
            <person name="Sparenborg J."/>
            <person name="Gallagher T."/>
            <person name="Overton L."/>
            <person name="Althoff R."/>
            <person name="Liu X."/>
            <person name="Sitz J."/>
            <person name="Katzel D."/>
            <person name="Neupane R."/>
            <person name="Shumway M."/>
            <person name="Koo H."/>
            <person name="Griesemer S."/>
            <person name="StGeorge K."/>
            <person name="Bennett R."/>
            <person name="Taylor J."/>
            <person name="Bao Y."/>
            <person name="Bolotov P."/>
            <person name="Dernovoy D."/>
            <person name="Kiryutin B."/>
            <person name="Lipman D.J."/>
            <person name="Tatusova T."/>
        </authorList>
    </citation>
    <scope>NUCLEOTIDE SEQUENCE [GENOMIC RNA]</scope>
</reference>
<reference key="2">
    <citation type="submission" date="2007-04" db="EMBL/GenBank/DDBJ databases">
        <authorList>
            <consortium name="The NIAID Influenza Genome Sequencing Consortium"/>
        </authorList>
    </citation>
    <scope>NUCLEOTIDE SEQUENCE [GENOMIC RNA]</scope>
</reference>
<sequence>MERIKELRNLMSQSRTREILTKTTVDHMAIIKKYTSGRQEKNPSLRMKWMMAMKYPITADKRITEMIPERNEQGQTLWSKMNDAGSDRVMVSPLAVTWWNRNGPMTSTVHYPKIYKTYFEKVERLKHGTFGPVHFRNQVKIRRRVDINPGHADLSAKEAQDVIMEVVFPNEVGARILTSESQLTITKEKKEELQDCKISPLMVAYMLERELVRKTRFLPVAGGTSSVYIEVLHLTQGTCWEQMYTPGGEVRNDDVDQSLIIAARNIVRRAAVSADPLASLLEMCHSTQIGGTRMVDILRQNPTEEQAVDICKAAMGLRISSSFSFGGFTFKRTSGSSVKREEEVLTGNLQTLKIRVHEGYEEFTMVGKRATAILRKATRRLIQLIVSGRDEQSIAEAIIVAMVFSQEDCMIKAVRGDLNFVNRANQRLNPMHQLLRHFQKDAKVLFQNWGIEHIDNVMGMIGILPDMTPSTEMSMRGVRVSKMGVDEYSSAERVVVSIDRFLRVRDQRGNVLLSPEEVSETQGTEKLTITYSSSMMWEINGPESVLVNTYQWIIRNWETVKIQWSQNPTMLYNKMEFEPFQSLVPKAIRGQYSGFVRTLFQQMRDVLGTFDTTQIIKLLPFAAAPPKQSRMQFSSLTVNVRGSGMRILVRGNSPVFNYNKTTKRLTVLGKDAGTLTEDPDEGTAGVESAVLRGFLILGKEDRRYGPALSINELSNLAKGEKANVLIGQGDVVLVMKRKRDSSILTDSQTATKRIRMAIN</sequence>
<organism>
    <name type="scientific">Influenza A virus (strain A/USA:Albany/12/1951 H1N1)</name>
    <dbReference type="NCBI Taxonomy" id="425580"/>
    <lineage>
        <taxon>Viruses</taxon>
        <taxon>Riboviria</taxon>
        <taxon>Orthornavirae</taxon>
        <taxon>Negarnaviricota</taxon>
        <taxon>Polyploviricotina</taxon>
        <taxon>Insthoviricetes</taxon>
        <taxon>Articulavirales</taxon>
        <taxon>Orthomyxoviridae</taxon>
        <taxon>Alphainfluenzavirus</taxon>
        <taxon>Alphainfluenzavirus influenzae</taxon>
        <taxon>Influenza A virus</taxon>
    </lineage>
</organism>